<organism>
    <name type="scientific">Locusta migratoria</name>
    <name type="common">Migratory locust</name>
    <dbReference type="NCBI Taxonomy" id="7004"/>
    <lineage>
        <taxon>Eukaryota</taxon>
        <taxon>Metazoa</taxon>
        <taxon>Ecdysozoa</taxon>
        <taxon>Arthropoda</taxon>
        <taxon>Hexapoda</taxon>
        <taxon>Insecta</taxon>
        <taxon>Pterygota</taxon>
        <taxon>Neoptera</taxon>
        <taxon>Polyneoptera</taxon>
        <taxon>Orthoptera</taxon>
        <taxon>Caelifera</taxon>
        <taxon>Acrididea</taxon>
        <taxon>Acridomorpha</taxon>
        <taxon>Acridoidea</taxon>
        <taxon>Acrididae</taxon>
        <taxon>Oedipodinae</taxon>
        <taxon>Locusta</taxon>
    </lineage>
</organism>
<name>APLP_LOCMI</name>
<reference key="1">
    <citation type="journal article" date="2000" name="J. Comp. Neurol.">
        <title>Molecular characterization and gene expression in the eye of the apolipophorin II/I precursor from Locusta migratoria.</title>
        <authorList>
            <person name="Bogerd J."/>
            <person name="Babin P.J."/>
            <person name="Kooiman F.P."/>
            <person name="Andre M."/>
            <person name="Ballagny C."/>
            <person name="van Marrewijk W.J."/>
            <person name="van der Horst D.J."/>
        </authorList>
    </citation>
    <scope>NUCLEOTIDE SEQUENCE [MRNA]</scope>
    <scope>PROTEIN SEQUENCE OF 22-33; 100-117; 204-228; 637-645; 668-682; 721-737; 1299-1308; 1489-1498 AND 2232-2242</scope>
    <scope>TISSUE SPECIFICITY</scope>
    <source>
        <tissue>Fat body</tissue>
    </source>
</reference>
<reference key="2">
    <citation type="submission" date="2007-04" db="EMBL/GenBank/DDBJ databases">
        <authorList>
            <person name="Bogerd J."/>
        </authorList>
    </citation>
    <scope>SEQUENCE REVISION TO 131; 140; 156; 189; 412-413; 494; 1087; 1103; 1559; 1646-1650; 2614; 2736; 2764; 2888; 3263 AND 3302</scope>
</reference>
<reference key="3">
    <citation type="journal article" date="2005" name="J. Lipid Res.">
        <title>Biosynthesis and secretion of insect lipoprotein: involvement of furin in cleavage of the apoB homolog, apolipophorin-II/I.</title>
        <authorList>
            <person name="Smolenaars M.M.W."/>
            <person name="Kasperaitis M.A.M."/>
            <person name="Richardson P.E."/>
            <person name="Rodenburg K.W."/>
            <person name="Van der Horst D.J."/>
        </authorList>
    </citation>
    <scope>CLEAVAGE BY FURIN</scope>
    <scope>MUTAGENESIS OF ARG-717; LYS-719 AND ARG-720</scope>
</reference>
<evidence type="ECO:0000250" key="1"/>
<evidence type="ECO:0000255" key="2"/>
<evidence type="ECO:0000255" key="3">
    <source>
        <dbReference type="PROSITE-ProRule" id="PRU00557"/>
    </source>
</evidence>
<evidence type="ECO:0000255" key="4">
    <source>
        <dbReference type="PROSITE-ProRule" id="PRU00580"/>
    </source>
</evidence>
<evidence type="ECO:0000269" key="5">
    <source>
    </source>
</evidence>
<evidence type="ECO:0000269" key="6">
    <source>
    </source>
</evidence>
<keyword id="KW-0165">Cleavage on pair of basic residues</keyword>
<keyword id="KW-0903">Direct protein sequencing</keyword>
<keyword id="KW-1015">Disulfide bond</keyword>
<keyword id="KW-0325">Glycoprotein</keyword>
<keyword id="KW-0445">Lipid transport</keyword>
<keyword id="KW-0446">Lipid-binding</keyword>
<keyword id="KW-0964">Secreted</keyword>
<keyword id="KW-0732">Signal</keyword>
<keyword id="KW-0813">Transport</keyword>
<keyword id="KW-0879">Wnt signaling pathway</keyword>
<comment type="function">
    <text evidence="1">Constitutes the major component of lipophorin, which mediates transport for various types of lipids in hemolymph. Acts by forming lipoprotein particles that bind lipoproteins and lipids. May be required for morphogens wingless (wg) and hedgehog (hh) function, possibly by acting as vehicles for the movement of wg and hh (By similarity).</text>
</comment>
<comment type="subcellular location">
    <subcellularLocation>
        <location>Secreted</location>
    </subcellularLocation>
</comment>
<comment type="tissue specificity">
    <text evidence="5">Present in brain, hemolymph, fat body and eyes.</text>
</comment>
<comment type="PTM">
    <text evidence="6">Cleaved into 2 chains by furin protease. However, prevention of cleavage does not impair its function.</text>
</comment>
<comment type="PTM">
    <text evidence="1">N-glycosylated.</text>
</comment>
<comment type="online information" name="Protein Spotlight">
    <link uri="https://www.proteinspotlight.org/back_issues/059"/>
    <text>Lipid freight - Issue 59 of June 2005</text>
</comment>
<protein>
    <recommendedName>
        <fullName>Apolipophorins</fullName>
    </recommendedName>
    <component>
        <recommendedName>
            <fullName>Apolipophorin-2</fullName>
        </recommendedName>
        <alternativeName>
            <fullName>Apolipophorin II</fullName>
        </alternativeName>
        <alternativeName>
            <fullName>apoLp-2</fullName>
        </alternativeName>
    </component>
    <component>
        <recommendedName>
            <fullName>Apolipophorin-1</fullName>
        </recommendedName>
        <alternativeName>
            <fullName>Apolipophorin I</fullName>
        </alternativeName>
        <alternativeName>
            <fullName>apoLp-1</fullName>
        </alternativeName>
    </component>
</protein>
<feature type="signal peptide" evidence="5">
    <location>
        <begin position="1"/>
        <end position="21"/>
    </location>
</feature>
<feature type="chain" id="PRO_0000041528" description="Apolipophorin-2">
    <location>
        <begin position="22"/>
        <end position="720"/>
    </location>
</feature>
<feature type="chain" id="PRO_0000041529" description="Apolipophorin-1">
    <location>
        <begin position="721"/>
        <end position="3380"/>
    </location>
</feature>
<feature type="domain" description="Vitellogenin" evidence="3">
    <location>
        <begin position="40"/>
        <end position="646"/>
    </location>
</feature>
<feature type="domain" description="VWFD" evidence="4">
    <location>
        <begin position="2815"/>
        <end position="2979"/>
    </location>
</feature>
<feature type="site" description="Cleavage; by furin">
    <location>
        <begin position="720"/>
        <end position="721"/>
    </location>
</feature>
<feature type="glycosylation site" description="N-linked (GlcNAc...) asparagine" evidence="2">
    <location>
        <position position="132"/>
    </location>
</feature>
<feature type="glycosylation site" description="N-linked (GlcNAc...) asparagine" evidence="2">
    <location>
        <position position="649"/>
    </location>
</feature>
<feature type="glycosylation site" description="N-linked (GlcNAc...) asparagine" evidence="2">
    <location>
        <position position="969"/>
    </location>
</feature>
<feature type="glycosylation site" description="N-linked (GlcNAc...) asparagine" evidence="2">
    <location>
        <position position="2174"/>
    </location>
</feature>
<feature type="glycosylation site" description="N-linked (GlcNAc...) asparagine" evidence="2">
    <location>
        <position position="2851"/>
    </location>
</feature>
<feature type="glycosylation site" description="N-linked (GlcNAc...) asparagine" evidence="2">
    <location>
        <position position="3177"/>
    </location>
</feature>
<feature type="disulfide bond" evidence="4">
    <location>
        <begin position="2839"/>
        <end position="2978"/>
    </location>
</feature>
<feature type="mutagenesis site" description="Abolishes cleavage by furin." evidence="6">
    <original>R</original>
    <variation>D</variation>
    <location>
        <position position="717"/>
    </location>
</feature>
<feature type="mutagenesis site" description="Partially affects cleavage by furin." evidence="6">
    <original>R</original>
    <variation>Q</variation>
    <location>
        <position position="717"/>
    </location>
</feature>
<feature type="mutagenesis site" description="Does not affect cleavage by furin." evidence="6">
    <original>K</original>
    <variation>A</variation>
    <location>
        <position position="719"/>
    </location>
</feature>
<feature type="mutagenesis site" description="Abolishes cleavage by furin." evidence="6">
    <original>R</original>
    <variation>Q</variation>
    <location>
        <position position="720"/>
    </location>
</feature>
<proteinExistence type="evidence at protein level"/>
<sequence>MGTPPHIWFLLILAISSGGLSAAVGGCNHQCTPQSSVFQYQKGQTYTYSFEGTTLTSLPGTQGEPVRLKLKATADLSVADDCNKVLRLRGVTVSGPDSKNYANLKDLEAHPVLANFKGSSINKQLCSEDGDNQSSLNIKRAILSLLQTPNTKSSTASEVDVFGICPTNVRHSQRGDVTVISKTRNLNRYASRENLIQETLSTRFTGQSDLHATPFLDADLHVEQQIKGGLIVSATSRESYLFRPFSNQGNGAKTIVETKLTLTSQNAQPAPPLASFTVPKSIVFEAPHALASVPGGSSAITAALHAAESSTKDGVTVDAAEKFRTLVSVLRQSSTTDILKVYNDVKAGAGFSNKHSARNLLLDALFRTSTGDAVEVIARLLKTKEITANHWYLSLAFIQHASLKSVVSISSLLDQKNLPTEAFLGIGSFIGRYCREHNCENVAEFDEVLNKFSKHLSGSTTSKAGENRAIAALKALGNIRHLNNALGEKVKQLALDKSLPPRVRVAALEVIQSDPCRKNIKQAALQILRDQVEDSELRIKAYLAVVECPCDNVVKTISNLLENEPIIQVGSFVVSHLKNLQASTDPSKAEAKEKLGQLKPKKIFSSDIRKYSQNYELSYAIDAINAGASVESNVIFSQSSYLPRSVSLNLTADVFGHSYNVFEIAARTENLDHIIESFLGPKGYIETEDDDKFVDEVEEKTKSLYNRITERFEKTFRQKRSVSKDAVDNIRQQAYKSLLPSQRDRSLDVDLSLKTFGSELAWFNYDGKHEQKSSERVVDEIFDAIDEGLKKSKKFNYDFEPHFTFLDSELSYPTNLGFPLKLAIDGSIAARLKLNGEVDVRSILRQPENAAFRLEFVPSAAVELTGKLLVDAYVVEGGLKLDYNVHSSTGINVAVHNLNDLGIDIKVGLPVKKQDIIDVKTDVLTTVKERGHPETSTPLHFNLKGNDYKQYRGCFDQLSPVSGLTFCGNVSVPWVSPTQAAAFYPLNGPSHLSVSIEADDVSEYHFRAEIKKDESAFKSAAVLFDTPGSSADRKVLLLVEKKEKPHQGITAHLKSGWKEIVAEGLLIDDNNEKSVSAKLVIESDEYSIKGGVKISGNPSRQVYKPILEYKAPAKDSGAKVKKSHKTSEGITVDGAVVVERTSDKGKYTFQDLSLKTPKGTFVINGQLDIVPRNYAFDLKLSVDKNELLLNGHLNYAEPKSIDVALEVTSPQFPDYGSGFQLINKRGDDYSDTKIILACGRDLKSDGSRLILEHFIKGKYETPDTFNLETKGEVLGTGHKIFGKFDIDSKPKHLEYDLKLGFDENEVTSDLVAKRDIKSPDDYELKFSAKILDNSIRIESSREVKPKDDSAFLNTLVVLSGKKYEFQVDVKLAAEDEYHTSLKAESNLKIEGKTSVRLITDFTTDAQTVNGHVKVSNEGEDFFELIYKLNRGSGNPSGNAKLFVKNYLDGAATFKYNNGVGSGTLQIDVLKLHRKIKATGDLTLSGSQRSAAIDLYWDADRDQSKQLLFKTENDVKEKSIDSKNTLKILDKLTTLNFKGSLSGAIDDGEVEGQGELILPVGTYLGVKFGRALHLTQADTKVGLHLQAEGRESASSTQPVWKSDFLLESALTRDSFVGEAKLLFETKGKDDLKLFLSGKSLPQGEKKLISGQFSGQGSLIGGRTSVIKLNSEIDETFIAYNLNSECNQGYRANIVGKINRGYSPVAVKQIENTLELLLPFDKLKQLKHTIIGTFSSQPESTPEFTVSNVIIWNNENTLKLTGEAAGDEKEGRTKWDLILPKEEPRTLETTWSNAGDNKKAGSLSFKWGGNKEAKVSTDIEFTSDNQPQILHLKATSPTEKFGIFDLALSLKKNADPADKIDFELTVTADQKKTDVKGSLGLAPGVPIIDVVAVQPSGTSKVFVDFLRKSDSELHGAIELQWVAFGGGHLTANGDIKLDIDDFYLKLDVDSPKFNFNKWHLEAGQRAAKGSKRIVFTAKSAEKVLFSGSTNFHSKAENNKISYSGNGQVRIGDKAHAFNFRSSRQNLIQDANKEIGVEYNLDFKIAGHGSLHNILKVTNKELHALGKQCSEGKPNCAVVEIKSKVSAADAKETTHDLVFLVDLKSVGVDTGVAFTAETVRRGFWLIDEQASLTLSHNGETTYKYKGYLKESGSGFTLTLPSRVIAAEVKLSSDVKPNHSKQQISASVWLDKTRLPNSFSSVSILLEEIEDKNTDKYVSQLRFTHPNLEKDLTVKGYVQIGLENKLFDSNLEIDIFKQKNQKISISSTVVEQKQNDVVKYLSTLDVKSKGHELDVTGRGEATVKPSLIALQSVLKYKKDKRIKEFKNFQFEVSTEKLLVHVKVPNHHLLHIDANTKINDKHASGDASVHIIGLPTSVIHIEGENKGFPVVKGTISSEGTPNKLELIADLSDGLLVEADFISESGKKELFYTFLSGKKDSRKPEFRWSVENIQSALEPHKNDIQEVLNKLKEISDEAGNEITKESSRLADSLKAGLPNFRRFVNTYETQLKALKEEIANDKVLKEISENWKEVIGDAAEVVSTLVNGILVTIDALLKTLNELAESVLDALKKSLPALKDSYKQAVDAIVGIAKSLTQSLVNILSSAAEILKKHEADIKEYLSVLADLANDVGKFVTKITGVIYEGVVEFSKPIKEKLDGLKFGVAIEFGKVVEQLQNLIVPQELLAFAQEIVSELKETTLTPEIQDLLQAIEKYLEKVSKKKDADVEKELKLIFEKAIDAVESVINFVVSEITGGDHTKDLYDINIPTVLPSFIQLPRVFSVRFSPLIYLVSNGVPCLSDLLASYRPSLRFDNIIPPYDATAILLNSHHFFTFDRRHLTFKGICSYILAQDVQDGNFTIIANIEGGSLKSIIVSDQATTFELASDKSLLVNGRPTEYPADEGEFHAWREYNRVGIQTKAGVKVTCETSIELCTFEINGFYFGKTRGLLGTINNEPWDDFTKPDGQVASKANEFGNAWKVDAQCANVDGVDHHEHSIKVEECEEVFSKASLLSPCSLFLDPAPYLEACSHIAHEATTKEEKQLAACRTAAAYVQACSVENVFVSVPPHCVHCSVNGDAAIDIGQSFSVKVPQKSADILIVLEQVTGNAETVKDFVSPIVSQLTQELSSRGISDVWISLLGYGAPGQEYPHLYTSSGGKLSYDGKQKNIQFGERKVLGPFPFDNFTESIDWLDEFTDQAFHLITTADTILDYPFRPGAAKSIIYVLDTSCETTLFLKHLPVKALKLKDAIGSPGIVLHLVTNVDSVQSKNIVGFDTNHAYYNQEGKKRVVSEVTGNEKAALKISETACGQIALATSGTVFNKNNLKQTKKFVAQHIADSLTNVELTQDCKCLPVEGIHTRAVCAVTGAREKEHLSVKGVKGTKGVKG</sequence>
<accession>Q9U943</accession>
<dbReference type="EMBL" id="AJ130944">
    <property type="protein sequence ID" value="CAB51918.2"/>
    <property type="molecule type" value="mRNA"/>
</dbReference>
<dbReference type="SMR" id="Q9U943"/>
<dbReference type="GO" id="GO:0005576">
    <property type="term" value="C:extracellular region"/>
    <property type="evidence" value="ECO:0007669"/>
    <property type="project" value="UniProtKB-SubCell"/>
</dbReference>
<dbReference type="GO" id="GO:0008289">
    <property type="term" value="F:lipid binding"/>
    <property type="evidence" value="ECO:0007669"/>
    <property type="project" value="UniProtKB-KW"/>
</dbReference>
<dbReference type="GO" id="GO:0005319">
    <property type="term" value="F:lipid transporter activity"/>
    <property type="evidence" value="ECO:0007669"/>
    <property type="project" value="InterPro"/>
</dbReference>
<dbReference type="GO" id="GO:0016055">
    <property type="term" value="P:Wnt signaling pathway"/>
    <property type="evidence" value="ECO:0007669"/>
    <property type="project" value="UniProtKB-KW"/>
</dbReference>
<dbReference type="FunFam" id="2.20.50.20:FF:000007">
    <property type="entry name" value="von Willebrand factor type D domaincontaining protein"/>
    <property type="match status" value="1"/>
</dbReference>
<dbReference type="Gene3D" id="2.30.230.10">
    <property type="entry name" value="Lipovitellin, beta-sheet shell regions, chain A"/>
    <property type="match status" value="1"/>
</dbReference>
<dbReference type="Gene3D" id="2.20.80.10">
    <property type="entry name" value="Lipovitellin-phosvitin complex, chain A, domain 4"/>
    <property type="match status" value="1"/>
</dbReference>
<dbReference type="Gene3D" id="2.20.50.20">
    <property type="entry name" value="Lipovitellin. Chain A, domain 3"/>
    <property type="match status" value="1"/>
</dbReference>
<dbReference type="Gene3D" id="1.25.10.20">
    <property type="entry name" value="Vitellinogen, superhelical"/>
    <property type="match status" value="1"/>
</dbReference>
<dbReference type="InterPro" id="IPR015819">
    <property type="entry name" value="Lipid_transp_b-sht_shell"/>
</dbReference>
<dbReference type="InterPro" id="IPR009454">
    <property type="entry name" value="Lipid_transpt_open_b-sht"/>
</dbReference>
<dbReference type="InterPro" id="IPR011030">
    <property type="entry name" value="Lipovitellin_superhlx_dom"/>
</dbReference>
<dbReference type="InterPro" id="IPR015816">
    <property type="entry name" value="Vitellinogen_b-sht_N"/>
</dbReference>
<dbReference type="InterPro" id="IPR015255">
    <property type="entry name" value="Vitellinogen_open_b-sht"/>
</dbReference>
<dbReference type="InterPro" id="IPR015817">
    <property type="entry name" value="Vitellinogen_open_b-sht_sub1"/>
</dbReference>
<dbReference type="InterPro" id="IPR050733">
    <property type="entry name" value="Vitellogenin/Apolipophorin"/>
</dbReference>
<dbReference type="InterPro" id="IPR001747">
    <property type="entry name" value="Vitellogenin_N"/>
</dbReference>
<dbReference type="InterPro" id="IPR001846">
    <property type="entry name" value="VWF_type-D"/>
</dbReference>
<dbReference type="PANTHER" id="PTHR23345:SF36">
    <property type="entry name" value="APOLIPOPHORINS"/>
    <property type="match status" value="1"/>
</dbReference>
<dbReference type="PANTHER" id="PTHR23345">
    <property type="entry name" value="VITELLOGENIN-RELATED"/>
    <property type="match status" value="1"/>
</dbReference>
<dbReference type="Pfam" id="PF06448">
    <property type="entry name" value="DUF1081"/>
    <property type="match status" value="1"/>
</dbReference>
<dbReference type="Pfam" id="PF09172">
    <property type="entry name" value="Vit_open_b-sht"/>
    <property type="match status" value="1"/>
</dbReference>
<dbReference type="Pfam" id="PF01347">
    <property type="entry name" value="Vitellogenin_N"/>
    <property type="match status" value="1"/>
</dbReference>
<dbReference type="Pfam" id="PF00094">
    <property type="entry name" value="VWD"/>
    <property type="match status" value="1"/>
</dbReference>
<dbReference type="SMART" id="SM01169">
    <property type="entry name" value="DUF1943"/>
    <property type="match status" value="1"/>
</dbReference>
<dbReference type="SMART" id="SM00638">
    <property type="entry name" value="LPD_N"/>
    <property type="match status" value="1"/>
</dbReference>
<dbReference type="SMART" id="SM00216">
    <property type="entry name" value="VWD"/>
    <property type="match status" value="1"/>
</dbReference>
<dbReference type="SUPFAM" id="SSF58113">
    <property type="entry name" value="Apolipoprotein A-I"/>
    <property type="match status" value="1"/>
</dbReference>
<dbReference type="SUPFAM" id="SSF56968">
    <property type="entry name" value="Lipovitellin-phosvitin complex, beta-sheet shell regions"/>
    <property type="match status" value="2"/>
</dbReference>
<dbReference type="SUPFAM" id="SSF48431">
    <property type="entry name" value="Lipovitellin-phosvitin complex, superhelical domain"/>
    <property type="match status" value="1"/>
</dbReference>
<dbReference type="PROSITE" id="PS51211">
    <property type="entry name" value="VITELLOGENIN"/>
    <property type="match status" value="1"/>
</dbReference>
<dbReference type="PROSITE" id="PS51233">
    <property type="entry name" value="VWFD"/>
    <property type="match status" value="1"/>
</dbReference>